<reference evidence="3" key="1">
    <citation type="journal article" date="2006" name="Mol. Plant Microbe Interact.">
        <title>Proteomic comparison of needles from blister rust-resistant and susceptible Pinus strobus seedlings reveals upregulation of putative disease resistance proteins.</title>
        <authorList>
            <person name="Smith J.A."/>
            <person name="Blanchette R.A."/>
            <person name="Burnes T.A."/>
            <person name="Jacobs J.J."/>
            <person name="Higgins L."/>
            <person name="Witthuhn B.A."/>
            <person name="David A.J."/>
            <person name="Gillman J.H."/>
        </authorList>
    </citation>
    <scope>PROTEIN SEQUENCE</scope>
    <source>
        <tissue evidence="1">Leaf</tissue>
    </source>
</reference>
<keyword id="KW-0903">Direct protein sequencing</keyword>
<organism>
    <name type="scientific">Pinus strobus</name>
    <name type="common">Eastern white pine</name>
    <dbReference type="NCBI Taxonomy" id="3348"/>
    <lineage>
        <taxon>Eukaryota</taxon>
        <taxon>Viridiplantae</taxon>
        <taxon>Streptophyta</taxon>
        <taxon>Embryophyta</taxon>
        <taxon>Tracheophyta</taxon>
        <taxon>Spermatophyta</taxon>
        <taxon>Pinopsida</taxon>
        <taxon>Pinidae</taxon>
        <taxon>Conifers I</taxon>
        <taxon>Pinales</taxon>
        <taxon>Pinaceae</taxon>
        <taxon>Pinus</taxon>
        <taxon>Pinus subgen. Strobus</taxon>
    </lineage>
</organism>
<evidence type="ECO:0000269" key="1">
    <source>
    </source>
</evidence>
<evidence type="ECO:0000303" key="2">
    <source>
    </source>
</evidence>
<evidence type="ECO:0000305" key="3"/>
<feature type="chain" id="PRO_0000240616" description="Putative NADH dehydrogenase subunit PS9">
    <location>
        <begin position="1" status="less than"/>
        <end position="21" status="greater than"/>
    </location>
</feature>
<feature type="non-consecutive residues" evidence="2">
    <location>
        <begin position="12"/>
        <end position="13"/>
    </location>
</feature>
<feature type="non-terminal residue" evidence="2">
    <location>
        <position position="1"/>
    </location>
</feature>
<feature type="non-terminal residue" evidence="2">
    <location>
        <position position="21"/>
    </location>
</feature>
<accession>P84725</accession>
<proteinExistence type="evidence at protein level"/>
<sequence length="21" mass="2060">AMASSLLSGWGGPTTLLVAPM</sequence>
<comment type="miscellaneous">
    <text evidence="1">On the 2D-gel the determined pI of this protein is: 7.1, its MW is: 22.1 kDa.</text>
</comment>
<comment type="caution">
    <text evidence="1">The order of the peptides shown is unknown.</text>
</comment>
<protein>
    <recommendedName>
        <fullName>Putative NADH dehydrogenase subunit PS9</fullName>
    </recommendedName>
</protein>
<name>PS9_PINST</name>